<evidence type="ECO:0000250" key="1"/>
<evidence type="ECO:0000255" key="2"/>
<evidence type="ECO:0000305" key="3"/>
<protein>
    <recommendedName>
        <fullName>Putative antiporter subunit mnhD2</fullName>
    </recommendedName>
    <alternativeName>
        <fullName>Mrp complex subunit D2</fullName>
    </alternativeName>
    <alternativeName>
        <fullName>Putative NADH-ubiquinone oxidoreductase subunit mnhD2</fullName>
    </alternativeName>
</protein>
<gene>
    <name type="primary">mnhD2</name>
    <name type="synonym">mrpD2</name>
    <name type="ordered locus">SAS0592</name>
</gene>
<proteinExistence type="inferred from homology"/>
<feature type="chain" id="PRO_0000372234" description="Putative antiporter subunit mnhD2">
    <location>
        <begin position="1"/>
        <end position="498"/>
    </location>
</feature>
<feature type="transmembrane region" description="Helical" evidence="2">
    <location>
        <begin position="2"/>
        <end position="22"/>
    </location>
</feature>
<feature type="transmembrane region" description="Helical" evidence="2">
    <location>
        <begin position="32"/>
        <end position="52"/>
    </location>
</feature>
<feature type="transmembrane region" description="Helical" evidence="2">
    <location>
        <begin position="78"/>
        <end position="98"/>
    </location>
</feature>
<feature type="transmembrane region" description="Helical" evidence="2">
    <location>
        <begin position="108"/>
        <end position="128"/>
    </location>
</feature>
<feature type="transmembrane region" description="Helical" evidence="2">
    <location>
        <begin position="130"/>
        <end position="150"/>
    </location>
</feature>
<feature type="transmembrane region" description="Helical" evidence="2">
    <location>
        <begin position="161"/>
        <end position="181"/>
    </location>
</feature>
<feature type="transmembrane region" description="Helical" evidence="2">
    <location>
        <begin position="209"/>
        <end position="229"/>
    </location>
</feature>
<feature type="transmembrane region" description="Helical" evidence="2">
    <location>
        <begin position="240"/>
        <end position="260"/>
    </location>
</feature>
<feature type="transmembrane region" description="Helical" evidence="2">
    <location>
        <begin position="271"/>
        <end position="291"/>
    </location>
</feature>
<feature type="transmembrane region" description="Helical" evidence="2">
    <location>
        <begin position="308"/>
        <end position="328"/>
    </location>
</feature>
<feature type="transmembrane region" description="Helical" evidence="2">
    <location>
        <begin position="330"/>
        <end position="350"/>
    </location>
</feature>
<feature type="transmembrane region" description="Helical" evidence="2">
    <location>
        <begin position="369"/>
        <end position="389"/>
    </location>
</feature>
<feature type="transmembrane region" description="Helical" evidence="2">
    <location>
        <begin position="403"/>
        <end position="423"/>
    </location>
</feature>
<feature type="transmembrane region" description="Helical" evidence="2">
    <location>
        <begin position="451"/>
        <end position="471"/>
    </location>
</feature>
<organism>
    <name type="scientific">Staphylococcus aureus (strain MSSA476)</name>
    <dbReference type="NCBI Taxonomy" id="282459"/>
    <lineage>
        <taxon>Bacteria</taxon>
        <taxon>Bacillati</taxon>
        <taxon>Bacillota</taxon>
        <taxon>Bacilli</taxon>
        <taxon>Bacillales</taxon>
        <taxon>Staphylococcaceae</taxon>
        <taxon>Staphylococcus</taxon>
    </lineage>
</organism>
<reference key="1">
    <citation type="journal article" date="2004" name="Proc. Natl. Acad. Sci. U.S.A.">
        <title>Complete genomes of two clinical Staphylococcus aureus strains: evidence for the rapid evolution of virulence and drug resistance.</title>
        <authorList>
            <person name="Holden M.T.G."/>
            <person name="Feil E.J."/>
            <person name="Lindsay J.A."/>
            <person name="Peacock S.J."/>
            <person name="Day N.P.J."/>
            <person name="Enright M.C."/>
            <person name="Foster T.J."/>
            <person name="Moore C.E."/>
            <person name="Hurst L."/>
            <person name="Atkin R."/>
            <person name="Barron A."/>
            <person name="Bason N."/>
            <person name="Bentley S.D."/>
            <person name="Chillingworth C."/>
            <person name="Chillingworth T."/>
            <person name="Churcher C."/>
            <person name="Clark L."/>
            <person name="Corton C."/>
            <person name="Cronin A."/>
            <person name="Doggett J."/>
            <person name="Dowd L."/>
            <person name="Feltwell T."/>
            <person name="Hance Z."/>
            <person name="Harris B."/>
            <person name="Hauser H."/>
            <person name="Holroyd S."/>
            <person name="Jagels K."/>
            <person name="James K.D."/>
            <person name="Lennard N."/>
            <person name="Line A."/>
            <person name="Mayes R."/>
            <person name="Moule S."/>
            <person name="Mungall K."/>
            <person name="Ormond D."/>
            <person name="Quail M.A."/>
            <person name="Rabbinowitsch E."/>
            <person name="Rutherford K.M."/>
            <person name="Sanders M."/>
            <person name="Sharp S."/>
            <person name="Simmonds M."/>
            <person name="Stevens K."/>
            <person name="Whitehead S."/>
            <person name="Barrell B.G."/>
            <person name="Spratt B.G."/>
            <person name="Parkhill J."/>
        </authorList>
    </citation>
    <scope>NUCLEOTIDE SEQUENCE [LARGE SCALE GENOMIC DNA]</scope>
    <source>
        <strain>MSSA476</strain>
    </source>
</reference>
<name>MNHD2_STAAS</name>
<sequence>MLSNLLILPMLLPFLCALILVFLKNNDRISKYLYLGTMTITTIISLMLLIYVQRHRPITLDFGGWSAPFGIQFLGDSLSLIMVTTASFVITLIMAYGFGRGEHKANRYHLPSFILFLSVGVIGSFLTSDLFNLYVMFEIMLLASFVLITLGQSVEQLRAAIIYVVLNIIGSWLFLLGIGLLYKTVGTLNFSHIAMRLNDMGDNRTVTMISLIFLVAFSAKAALVLFMWLPKAYAVLNTELAALFAALMTKVGAYALIRFFTLLFDQHNDLIHPLLATMAAITMVIGAIGVIAYKDIKKIAAYQVIISIGFIILGLGTNTFAGINGAIFYLVNDIVVKTLLFFIIGSLVYITGYRQYQYLNGLAKKEPLFGVAFIIMIFAIGGVPPFSGFPGKVLIFQGALQNGNYIGLALMIITSLIAMYSLFRILFYMYFGDKDGEEVNFKKIPLYRKRILSILVVVVIAIGIAAPVVLNVTSDATELNTSDQLYQKLVNPHLKGED</sequence>
<accession>Q6GBK4</accession>
<comment type="subunit">
    <text evidence="1">May form a heterooligomeric complex that consists of seven subunits: mnhA2, mnhB2, mnhC2, mnhD2, mnhE2, mnhF2 and mnhG2.</text>
</comment>
<comment type="subcellular location">
    <subcellularLocation>
        <location evidence="3">Cell membrane</location>
        <topology evidence="3">Multi-pass membrane protein</topology>
    </subcellularLocation>
</comment>
<comment type="similarity">
    <text evidence="3">Belongs to the CPA3 antiporters (TC 2.A.63) subunit D family.</text>
</comment>
<dbReference type="EMBL" id="BX571857">
    <property type="protein sequence ID" value="CAG42367.1"/>
    <property type="molecule type" value="Genomic_DNA"/>
</dbReference>
<dbReference type="RefSeq" id="WP_000950548.1">
    <property type="nucleotide sequence ID" value="NC_002953.3"/>
</dbReference>
<dbReference type="SMR" id="Q6GBK4"/>
<dbReference type="KEGG" id="sas:SAS0592"/>
<dbReference type="HOGENOM" id="CLU_007100_9_2_9"/>
<dbReference type="GO" id="GO:0005886">
    <property type="term" value="C:plasma membrane"/>
    <property type="evidence" value="ECO:0007669"/>
    <property type="project" value="UniProtKB-SubCell"/>
</dbReference>
<dbReference type="GO" id="GO:0015297">
    <property type="term" value="F:antiporter activity"/>
    <property type="evidence" value="ECO:0007669"/>
    <property type="project" value="UniProtKB-KW"/>
</dbReference>
<dbReference type="GO" id="GO:0008137">
    <property type="term" value="F:NADH dehydrogenase (ubiquinone) activity"/>
    <property type="evidence" value="ECO:0007669"/>
    <property type="project" value="InterPro"/>
</dbReference>
<dbReference type="GO" id="GO:0042773">
    <property type="term" value="P:ATP synthesis coupled electron transport"/>
    <property type="evidence" value="ECO:0007669"/>
    <property type="project" value="InterPro"/>
</dbReference>
<dbReference type="InterPro" id="IPR050586">
    <property type="entry name" value="CPA3_Na-H_Antiporter_D"/>
</dbReference>
<dbReference type="InterPro" id="IPR003918">
    <property type="entry name" value="NADH_UbQ_OxRdtase"/>
</dbReference>
<dbReference type="InterPro" id="IPR001750">
    <property type="entry name" value="ND/Mrp_TM"/>
</dbReference>
<dbReference type="NCBIfam" id="NF009306">
    <property type="entry name" value="PRK12663.1"/>
    <property type="match status" value="1"/>
</dbReference>
<dbReference type="PANTHER" id="PTHR42703:SF1">
    <property type="entry name" value="NA(+)_H(+) ANTIPORTER SUBUNIT D1"/>
    <property type="match status" value="1"/>
</dbReference>
<dbReference type="PANTHER" id="PTHR42703">
    <property type="entry name" value="NADH DEHYDROGENASE"/>
    <property type="match status" value="1"/>
</dbReference>
<dbReference type="Pfam" id="PF00361">
    <property type="entry name" value="Proton_antipo_M"/>
    <property type="match status" value="1"/>
</dbReference>
<dbReference type="PRINTS" id="PR01437">
    <property type="entry name" value="NUOXDRDTASE4"/>
</dbReference>
<keyword id="KW-0050">Antiport</keyword>
<keyword id="KW-1003">Cell membrane</keyword>
<keyword id="KW-0406">Ion transport</keyword>
<keyword id="KW-0472">Membrane</keyword>
<keyword id="KW-0812">Transmembrane</keyword>
<keyword id="KW-1133">Transmembrane helix</keyword>
<keyword id="KW-0813">Transport</keyword>